<dbReference type="EC" id="2.5.1.6" evidence="1"/>
<dbReference type="EMBL" id="AE000512">
    <property type="protein sequence ID" value="AAD36725.1"/>
    <property type="molecule type" value="Genomic_DNA"/>
</dbReference>
<dbReference type="PIR" id="G72228">
    <property type="entry name" value="G72228"/>
</dbReference>
<dbReference type="RefSeq" id="NP_229458.1">
    <property type="nucleotide sequence ID" value="NC_000853.1"/>
</dbReference>
<dbReference type="RefSeq" id="WP_004082170.1">
    <property type="nucleotide sequence ID" value="NZ_CP011107.1"/>
</dbReference>
<dbReference type="SMR" id="Q9X1Y8"/>
<dbReference type="FunCoup" id="Q9X1Y8">
    <property type="interactions" value="386"/>
</dbReference>
<dbReference type="STRING" id="243274.TM_1658"/>
<dbReference type="PaxDb" id="243274-THEMA_05955"/>
<dbReference type="EnsemblBacteria" id="AAD36725">
    <property type="protein sequence ID" value="AAD36725"/>
    <property type="gene ID" value="TM_1658"/>
</dbReference>
<dbReference type="KEGG" id="tma:TM1658"/>
<dbReference type="KEGG" id="tmi:THEMA_05955"/>
<dbReference type="KEGG" id="tmm:Tmari_1667"/>
<dbReference type="KEGG" id="tmw:THMA_1699"/>
<dbReference type="eggNOG" id="COG0192">
    <property type="taxonomic scope" value="Bacteria"/>
</dbReference>
<dbReference type="InParanoid" id="Q9X1Y8"/>
<dbReference type="OrthoDB" id="9801686at2"/>
<dbReference type="UniPathway" id="UPA00315">
    <property type="reaction ID" value="UER00080"/>
</dbReference>
<dbReference type="Proteomes" id="UP000008183">
    <property type="component" value="Chromosome"/>
</dbReference>
<dbReference type="GO" id="GO:0005829">
    <property type="term" value="C:cytosol"/>
    <property type="evidence" value="ECO:0000318"/>
    <property type="project" value="GO_Central"/>
</dbReference>
<dbReference type="GO" id="GO:0005524">
    <property type="term" value="F:ATP binding"/>
    <property type="evidence" value="ECO:0007669"/>
    <property type="project" value="UniProtKB-UniRule"/>
</dbReference>
<dbReference type="GO" id="GO:0000287">
    <property type="term" value="F:magnesium ion binding"/>
    <property type="evidence" value="ECO:0007669"/>
    <property type="project" value="UniProtKB-UniRule"/>
</dbReference>
<dbReference type="GO" id="GO:0004478">
    <property type="term" value="F:methionine adenosyltransferase activity"/>
    <property type="evidence" value="ECO:0000318"/>
    <property type="project" value="GO_Central"/>
</dbReference>
<dbReference type="GO" id="GO:0006730">
    <property type="term" value="P:one-carbon metabolic process"/>
    <property type="evidence" value="ECO:0007669"/>
    <property type="project" value="UniProtKB-KW"/>
</dbReference>
<dbReference type="GO" id="GO:0006556">
    <property type="term" value="P:S-adenosylmethionine biosynthetic process"/>
    <property type="evidence" value="ECO:0000318"/>
    <property type="project" value="GO_Central"/>
</dbReference>
<dbReference type="CDD" id="cd18079">
    <property type="entry name" value="S-AdoMet_synt"/>
    <property type="match status" value="1"/>
</dbReference>
<dbReference type="FunFam" id="3.30.300.10:FF:000003">
    <property type="entry name" value="S-adenosylmethionine synthase"/>
    <property type="match status" value="1"/>
</dbReference>
<dbReference type="FunFam" id="3.30.300.10:FF:000004">
    <property type="entry name" value="S-adenosylmethionine synthase"/>
    <property type="match status" value="1"/>
</dbReference>
<dbReference type="Gene3D" id="3.30.300.10">
    <property type="match status" value="3"/>
</dbReference>
<dbReference type="HAMAP" id="MF_00086">
    <property type="entry name" value="S_AdoMet_synth1"/>
    <property type="match status" value="1"/>
</dbReference>
<dbReference type="InterPro" id="IPR022631">
    <property type="entry name" value="ADOMET_SYNTHASE_CS"/>
</dbReference>
<dbReference type="InterPro" id="IPR022630">
    <property type="entry name" value="S-AdoMet_synt_C"/>
</dbReference>
<dbReference type="InterPro" id="IPR022629">
    <property type="entry name" value="S-AdoMet_synt_central"/>
</dbReference>
<dbReference type="InterPro" id="IPR022628">
    <property type="entry name" value="S-AdoMet_synt_N"/>
</dbReference>
<dbReference type="InterPro" id="IPR002133">
    <property type="entry name" value="S-AdoMet_synthetase"/>
</dbReference>
<dbReference type="InterPro" id="IPR022636">
    <property type="entry name" value="S-AdoMet_synthetase_sfam"/>
</dbReference>
<dbReference type="NCBIfam" id="TIGR01034">
    <property type="entry name" value="metK"/>
    <property type="match status" value="1"/>
</dbReference>
<dbReference type="PANTHER" id="PTHR11964">
    <property type="entry name" value="S-ADENOSYLMETHIONINE SYNTHETASE"/>
    <property type="match status" value="1"/>
</dbReference>
<dbReference type="Pfam" id="PF02773">
    <property type="entry name" value="S-AdoMet_synt_C"/>
    <property type="match status" value="1"/>
</dbReference>
<dbReference type="Pfam" id="PF02772">
    <property type="entry name" value="S-AdoMet_synt_M"/>
    <property type="match status" value="1"/>
</dbReference>
<dbReference type="Pfam" id="PF00438">
    <property type="entry name" value="S-AdoMet_synt_N"/>
    <property type="match status" value="1"/>
</dbReference>
<dbReference type="PIRSF" id="PIRSF000497">
    <property type="entry name" value="MAT"/>
    <property type="match status" value="1"/>
</dbReference>
<dbReference type="SUPFAM" id="SSF55973">
    <property type="entry name" value="S-adenosylmethionine synthetase"/>
    <property type="match status" value="3"/>
</dbReference>
<dbReference type="PROSITE" id="PS00376">
    <property type="entry name" value="ADOMET_SYNTHASE_1"/>
    <property type="match status" value="1"/>
</dbReference>
<dbReference type="PROSITE" id="PS00377">
    <property type="entry name" value="ADOMET_SYNTHASE_2"/>
    <property type="match status" value="1"/>
</dbReference>
<sequence length="395" mass="43673">MRRLFTSESVTEGHPDKIADQISDAILDAMLEQDPRSRVAVETLVTTGLVIIAGEVTTRAYVEIPDIARKTILEIGYTRAKYGFDGETCGVLTSIHSQSPDIALGVDKALEVKTGEEVADEFEALGAGDQGIMFGYATNETPEYMPLPITLAHKLAMRLAEVRKNGTLPFLRPDGKTQVTIEYEDDKPVRVDTVLISTQHDPDISQADLREAIIEHVINPVIPEQYRDDKMKILVNPTGRFVLGGPMADTGLTGRKIIVDTYGGWVPHGGGAFSGKDPTKVDRSAHYMARYVAKNVVAAGLADKFLIQLSYAIGVAKPVSIMIDTYGTAKVDEDKLLKVITELFDFRPGAIIKKLNLLRPIYRKTAAYGHFGRNEEEFTWEKLDMVDELKRAFNM</sequence>
<proteinExistence type="inferred from homology"/>
<keyword id="KW-0067">ATP-binding</keyword>
<keyword id="KW-0963">Cytoplasm</keyword>
<keyword id="KW-0460">Magnesium</keyword>
<keyword id="KW-0479">Metal-binding</keyword>
<keyword id="KW-0547">Nucleotide-binding</keyword>
<keyword id="KW-0554">One-carbon metabolism</keyword>
<keyword id="KW-0630">Potassium</keyword>
<keyword id="KW-1185">Reference proteome</keyword>
<keyword id="KW-0808">Transferase</keyword>
<name>METK_THEMA</name>
<accession>Q9X1Y8</accession>
<feature type="chain" id="PRO_0000174613" description="S-adenosylmethionine synthase">
    <location>
        <begin position="1"/>
        <end position="395"/>
    </location>
</feature>
<feature type="region of interest" description="Flexible loop" evidence="1">
    <location>
        <begin position="98"/>
        <end position="108"/>
    </location>
</feature>
<feature type="binding site" description="in other chain" evidence="1">
    <location>
        <position position="14"/>
    </location>
    <ligand>
        <name>ATP</name>
        <dbReference type="ChEBI" id="CHEBI:30616"/>
        <note>ligand shared between two neighboring subunits</note>
    </ligand>
</feature>
<feature type="binding site" evidence="1">
    <location>
        <position position="16"/>
    </location>
    <ligand>
        <name>Mg(2+)</name>
        <dbReference type="ChEBI" id="CHEBI:18420"/>
    </ligand>
</feature>
<feature type="binding site" evidence="1">
    <location>
        <position position="42"/>
    </location>
    <ligand>
        <name>K(+)</name>
        <dbReference type="ChEBI" id="CHEBI:29103"/>
    </ligand>
</feature>
<feature type="binding site" description="in other chain" evidence="1">
    <location>
        <position position="55"/>
    </location>
    <ligand>
        <name>L-methionine</name>
        <dbReference type="ChEBI" id="CHEBI:57844"/>
        <note>ligand shared between two neighboring subunits</note>
    </ligand>
</feature>
<feature type="binding site" description="in other chain" evidence="1">
    <location>
        <position position="98"/>
    </location>
    <ligand>
        <name>L-methionine</name>
        <dbReference type="ChEBI" id="CHEBI:57844"/>
        <note>ligand shared between two neighboring subunits</note>
    </ligand>
</feature>
<feature type="binding site" description="in other chain" evidence="1">
    <location>
        <begin position="174"/>
        <end position="176"/>
    </location>
    <ligand>
        <name>ATP</name>
        <dbReference type="ChEBI" id="CHEBI:30616"/>
        <note>ligand shared between two neighboring subunits</note>
    </ligand>
</feature>
<feature type="binding site" description="in other chain" evidence="1">
    <location>
        <begin position="240"/>
        <end position="241"/>
    </location>
    <ligand>
        <name>ATP</name>
        <dbReference type="ChEBI" id="CHEBI:30616"/>
        <note>ligand shared between two neighboring subunits</note>
    </ligand>
</feature>
<feature type="binding site" evidence="1">
    <location>
        <position position="249"/>
    </location>
    <ligand>
        <name>ATP</name>
        <dbReference type="ChEBI" id="CHEBI:30616"/>
        <note>ligand shared between two neighboring subunits</note>
    </ligand>
</feature>
<feature type="binding site" evidence="1">
    <location>
        <position position="249"/>
    </location>
    <ligand>
        <name>L-methionine</name>
        <dbReference type="ChEBI" id="CHEBI:57844"/>
        <note>ligand shared between two neighboring subunits</note>
    </ligand>
</feature>
<feature type="binding site" description="in other chain" evidence="1">
    <location>
        <begin position="255"/>
        <end position="256"/>
    </location>
    <ligand>
        <name>ATP</name>
        <dbReference type="ChEBI" id="CHEBI:30616"/>
        <note>ligand shared between two neighboring subunits</note>
    </ligand>
</feature>
<feature type="binding site" evidence="1">
    <location>
        <position position="272"/>
    </location>
    <ligand>
        <name>ATP</name>
        <dbReference type="ChEBI" id="CHEBI:30616"/>
        <note>ligand shared between two neighboring subunits</note>
    </ligand>
</feature>
<feature type="binding site" evidence="1">
    <location>
        <position position="276"/>
    </location>
    <ligand>
        <name>ATP</name>
        <dbReference type="ChEBI" id="CHEBI:30616"/>
        <note>ligand shared between two neighboring subunits</note>
    </ligand>
</feature>
<feature type="binding site" description="in other chain" evidence="1">
    <location>
        <position position="280"/>
    </location>
    <ligand>
        <name>L-methionine</name>
        <dbReference type="ChEBI" id="CHEBI:57844"/>
        <note>ligand shared between two neighboring subunits</note>
    </ligand>
</feature>
<evidence type="ECO:0000255" key="1">
    <source>
        <dbReference type="HAMAP-Rule" id="MF_00086"/>
    </source>
</evidence>
<protein>
    <recommendedName>
        <fullName evidence="1">S-adenosylmethionine synthase</fullName>
        <shortName evidence="1">AdoMet synthase</shortName>
        <ecNumber evidence="1">2.5.1.6</ecNumber>
    </recommendedName>
    <alternativeName>
        <fullName evidence="1">MAT</fullName>
    </alternativeName>
    <alternativeName>
        <fullName evidence="1">Methionine adenosyltransferase</fullName>
    </alternativeName>
</protein>
<reference key="1">
    <citation type="journal article" date="1999" name="Nature">
        <title>Evidence for lateral gene transfer between Archaea and Bacteria from genome sequence of Thermotoga maritima.</title>
        <authorList>
            <person name="Nelson K.E."/>
            <person name="Clayton R.A."/>
            <person name="Gill S.R."/>
            <person name="Gwinn M.L."/>
            <person name="Dodson R.J."/>
            <person name="Haft D.H."/>
            <person name="Hickey E.K."/>
            <person name="Peterson J.D."/>
            <person name="Nelson W.C."/>
            <person name="Ketchum K.A."/>
            <person name="McDonald L.A."/>
            <person name="Utterback T.R."/>
            <person name="Malek J.A."/>
            <person name="Linher K.D."/>
            <person name="Garrett M.M."/>
            <person name="Stewart A.M."/>
            <person name="Cotton M.D."/>
            <person name="Pratt M.S."/>
            <person name="Phillips C.A."/>
            <person name="Richardson D.L."/>
            <person name="Heidelberg J.F."/>
            <person name="Sutton G.G."/>
            <person name="Fleischmann R.D."/>
            <person name="Eisen J.A."/>
            <person name="White O."/>
            <person name="Salzberg S.L."/>
            <person name="Smith H.O."/>
            <person name="Venter J.C."/>
            <person name="Fraser C.M."/>
        </authorList>
    </citation>
    <scope>NUCLEOTIDE SEQUENCE [LARGE SCALE GENOMIC DNA]</scope>
    <source>
        <strain>ATCC 43589 / DSM 3109 / JCM 10099 / NBRC 100826 / MSB8</strain>
    </source>
</reference>
<organism>
    <name type="scientific">Thermotoga maritima (strain ATCC 43589 / DSM 3109 / JCM 10099 / NBRC 100826 / MSB8)</name>
    <dbReference type="NCBI Taxonomy" id="243274"/>
    <lineage>
        <taxon>Bacteria</taxon>
        <taxon>Thermotogati</taxon>
        <taxon>Thermotogota</taxon>
        <taxon>Thermotogae</taxon>
        <taxon>Thermotogales</taxon>
        <taxon>Thermotogaceae</taxon>
        <taxon>Thermotoga</taxon>
    </lineage>
</organism>
<comment type="function">
    <text evidence="1">Catalyzes the formation of S-adenosylmethionine (AdoMet) from methionine and ATP. The overall synthetic reaction is composed of two sequential steps, AdoMet formation and the subsequent tripolyphosphate hydrolysis which occurs prior to release of AdoMet from the enzyme.</text>
</comment>
<comment type="catalytic activity">
    <reaction evidence="1">
        <text>L-methionine + ATP + H2O = S-adenosyl-L-methionine + phosphate + diphosphate</text>
        <dbReference type="Rhea" id="RHEA:21080"/>
        <dbReference type="ChEBI" id="CHEBI:15377"/>
        <dbReference type="ChEBI" id="CHEBI:30616"/>
        <dbReference type="ChEBI" id="CHEBI:33019"/>
        <dbReference type="ChEBI" id="CHEBI:43474"/>
        <dbReference type="ChEBI" id="CHEBI:57844"/>
        <dbReference type="ChEBI" id="CHEBI:59789"/>
        <dbReference type="EC" id="2.5.1.6"/>
    </reaction>
</comment>
<comment type="cofactor">
    <cofactor evidence="1">
        <name>Mg(2+)</name>
        <dbReference type="ChEBI" id="CHEBI:18420"/>
    </cofactor>
    <text evidence="1">Binds 2 divalent ions per subunit.</text>
</comment>
<comment type="cofactor">
    <cofactor evidence="1">
        <name>K(+)</name>
        <dbReference type="ChEBI" id="CHEBI:29103"/>
    </cofactor>
    <text evidence="1">Binds 1 potassium ion per subunit.</text>
</comment>
<comment type="pathway">
    <text evidence="1">Amino-acid biosynthesis; S-adenosyl-L-methionine biosynthesis; S-adenosyl-L-methionine from L-methionine: step 1/1.</text>
</comment>
<comment type="subunit">
    <text evidence="1">Homotetramer; dimer of dimers.</text>
</comment>
<comment type="subcellular location">
    <subcellularLocation>
        <location evidence="1">Cytoplasm</location>
    </subcellularLocation>
</comment>
<comment type="similarity">
    <text evidence="1">Belongs to the AdoMet synthase family.</text>
</comment>
<gene>
    <name evidence="1" type="primary">metK</name>
    <name type="ordered locus">TM_1658</name>
</gene>